<name>TILS_HAEDU</name>
<feature type="chain" id="PRO_0000181700" description="tRNA(Ile)-lysidine synthase">
    <location>
        <begin position="1"/>
        <end position="428"/>
    </location>
</feature>
<feature type="binding site" evidence="1">
    <location>
        <begin position="25"/>
        <end position="30"/>
    </location>
    <ligand>
        <name>ATP</name>
        <dbReference type="ChEBI" id="CHEBI:30616"/>
    </ligand>
</feature>
<evidence type="ECO:0000255" key="1">
    <source>
        <dbReference type="HAMAP-Rule" id="MF_01161"/>
    </source>
</evidence>
<sequence>MLLSRFQQQLTQHFPQQPNVLLSLSGGIDSVVLLDLFSRTTTPLRAIYIHHGLSANADNWADFCEALCKQYNIPFILQKVTVDKSTGIEAGARTARYKAIAEHIQANEILATAHHLNDQAETFLLALKRGSGVKGLSAMQIVSHRQNMTIFRPLLSTTKKEIQQYAKQQQLCWIEDESNQNNHYDRNFLRNQILPLLLQRWPQFNQMIARSAKHCTAQQQLLAELLDEELHRYANIDEKSLQISQFKHFSPLKQQQLIRLWLAKCDIPMPTSAQFEQIISGFLNSATDKHPQLRLKNWTLRRFQKTLYLTPQLANTQHFCQILSVNQTIDLPDNLGQLTRQPQQIIYQQTHKTNRLLLPESLRTVPLTIKLHQTGKVKRYQHPHSEEMKKLYQQAKIPVWQRTRTILVFFEDQLVDLLTQHKNQQNND</sequence>
<reference key="1">
    <citation type="submission" date="2003-06" db="EMBL/GenBank/DDBJ databases">
        <title>The complete genome sequence of Haemophilus ducreyi.</title>
        <authorList>
            <person name="Munson R.S. Jr."/>
            <person name="Ray W.C."/>
            <person name="Mahairas G."/>
            <person name="Sabo P."/>
            <person name="Mungur R."/>
            <person name="Johnson L."/>
            <person name="Nguyen D."/>
            <person name="Wang J."/>
            <person name="Forst C."/>
            <person name="Hood L."/>
        </authorList>
    </citation>
    <scope>NUCLEOTIDE SEQUENCE [LARGE SCALE GENOMIC DNA]</scope>
    <source>
        <strain>35000HP / ATCC 700724</strain>
    </source>
</reference>
<gene>
    <name evidence="1" type="primary">tilS</name>
    <name type="ordered locus">HD_0014</name>
</gene>
<keyword id="KW-0067">ATP-binding</keyword>
<keyword id="KW-0963">Cytoplasm</keyword>
<keyword id="KW-0436">Ligase</keyword>
<keyword id="KW-0547">Nucleotide-binding</keyword>
<keyword id="KW-1185">Reference proteome</keyword>
<keyword id="KW-0819">tRNA processing</keyword>
<dbReference type="EC" id="6.3.4.19" evidence="1"/>
<dbReference type="EMBL" id="AE017143">
    <property type="protein sequence ID" value="AAP95037.1"/>
    <property type="molecule type" value="Genomic_DNA"/>
</dbReference>
<dbReference type="RefSeq" id="WP_010944091.1">
    <property type="nucleotide sequence ID" value="NC_002940.2"/>
</dbReference>
<dbReference type="SMR" id="Q7VPN7"/>
<dbReference type="STRING" id="233412.HD_0014"/>
<dbReference type="KEGG" id="hdu:HD_0014"/>
<dbReference type="eggNOG" id="COG0037">
    <property type="taxonomic scope" value="Bacteria"/>
</dbReference>
<dbReference type="HOGENOM" id="CLU_018869_2_0_6"/>
<dbReference type="OrthoDB" id="9807403at2"/>
<dbReference type="Proteomes" id="UP000001022">
    <property type="component" value="Chromosome"/>
</dbReference>
<dbReference type="GO" id="GO:0005737">
    <property type="term" value="C:cytoplasm"/>
    <property type="evidence" value="ECO:0007669"/>
    <property type="project" value="UniProtKB-SubCell"/>
</dbReference>
<dbReference type="GO" id="GO:0005524">
    <property type="term" value="F:ATP binding"/>
    <property type="evidence" value="ECO:0007669"/>
    <property type="project" value="UniProtKB-UniRule"/>
</dbReference>
<dbReference type="GO" id="GO:0032267">
    <property type="term" value="F:tRNA(Ile)-lysidine synthase activity"/>
    <property type="evidence" value="ECO:0007669"/>
    <property type="project" value="UniProtKB-EC"/>
</dbReference>
<dbReference type="GO" id="GO:0006400">
    <property type="term" value="P:tRNA modification"/>
    <property type="evidence" value="ECO:0007669"/>
    <property type="project" value="UniProtKB-UniRule"/>
</dbReference>
<dbReference type="CDD" id="cd01992">
    <property type="entry name" value="TilS_N"/>
    <property type="match status" value="1"/>
</dbReference>
<dbReference type="Gene3D" id="1.20.59.20">
    <property type="match status" value="1"/>
</dbReference>
<dbReference type="Gene3D" id="3.40.50.620">
    <property type="entry name" value="HUPs"/>
    <property type="match status" value="1"/>
</dbReference>
<dbReference type="HAMAP" id="MF_01161">
    <property type="entry name" value="tRNA_Ile_lys_synt"/>
    <property type="match status" value="1"/>
</dbReference>
<dbReference type="InterPro" id="IPR012796">
    <property type="entry name" value="Lysidine-tRNA-synth_C"/>
</dbReference>
<dbReference type="InterPro" id="IPR014729">
    <property type="entry name" value="Rossmann-like_a/b/a_fold"/>
</dbReference>
<dbReference type="InterPro" id="IPR011063">
    <property type="entry name" value="TilS/TtcA_N"/>
</dbReference>
<dbReference type="InterPro" id="IPR012094">
    <property type="entry name" value="tRNA_Ile_lys_synt"/>
</dbReference>
<dbReference type="InterPro" id="IPR012795">
    <property type="entry name" value="tRNA_Ile_lys_synt_N"/>
</dbReference>
<dbReference type="InterPro" id="IPR015262">
    <property type="entry name" value="tRNA_Ile_lys_synt_subst-bd"/>
</dbReference>
<dbReference type="NCBIfam" id="TIGR02433">
    <property type="entry name" value="lysidine_TilS_C"/>
    <property type="match status" value="1"/>
</dbReference>
<dbReference type="NCBIfam" id="TIGR02432">
    <property type="entry name" value="lysidine_TilS_N"/>
    <property type="match status" value="1"/>
</dbReference>
<dbReference type="PANTHER" id="PTHR43033">
    <property type="entry name" value="TRNA(ILE)-LYSIDINE SYNTHASE-RELATED"/>
    <property type="match status" value="1"/>
</dbReference>
<dbReference type="PANTHER" id="PTHR43033:SF1">
    <property type="entry name" value="TRNA(ILE)-LYSIDINE SYNTHASE-RELATED"/>
    <property type="match status" value="1"/>
</dbReference>
<dbReference type="Pfam" id="PF01171">
    <property type="entry name" value="ATP_bind_3"/>
    <property type="match status" value="1"/>
</dbReference>
<dbReference type="Pfam" id="PF09179">
    <property type="entry name" value="TilS"/>
    <property type="match status" value="1"/>
</dbReference>
<dbReference type="Pfam" id="PF11734">
    <property type="entry name" value="TilS_C"/>
    <property type="match status" value="1"/>
</dbReference>
<dbReference type="SUPFAM" id="SSF52402">
    <property type="entry name" value="Adenine nucleotide alpha hydrolases-like"/>
    <property type="match status" value="1"/>
</dbReference>
<dbReference type="SUPFAM" id="SSF82829">
    <property type="entry name" value="MesJ substrate recognition domain-like"/>
    <property type="match status" value="1"/>
</dbReference>
<dbReference type="SUPFAM" id="SSF56037">
    <property type="entry name" value="PheT/TilS domain"/>
    <property type="match status" value="1"/>
</dbReference>
<proteinExistence type="inferred from homology"/>
<protein>
    <recommendedName>
        <fullName evidence="1">tRNA(Ile)-lysidine synthase</fullName>
        <ecNumber evidence="1">6.3.4.19</ecNumber>
    </recommendedName>
    <alternativeName>
        <fullName evidence="1">tRNA(Ile)-2-lysyl-cytidine synthase</fullName>
    </alternativeName>
    <alternativeName>
        <fullName evidence="1">tRNA(Ile)-lysidine synthetase</fullName>
    </alternativeName>
</protein>
<accession>Q7VPN7</accession>
<comment type="function">
    <text evidence="1">Ligates lysine onto the cytidine present at position 34 of the AUA codon-specific tRNA(Ile) that contains the anticodon CAU, in an ATP-dependent manner. Cytidine is converted to lysidine, thus changing the amino acid specificity of the tRNA from methionine to isoleucine.</text>
</comment>
<comment type="catalytic activity">
    <reaction evidence="1">
        <text>cytidine(34) in tRNA(Ile2) + L-lysine + ATP = lysidine(34) in tRNA(Ile2) + AMP + diphosphate + H(+)</text>
        <dbReference type="Rhea" id="RHEA:43744"/>
        <dbReference type="Rhea" id="RHEA-COMP:10625"/>
        <dbReference type="Rhea" id="RHEA-COMP:10670"/>
        <dbReference type="ChEBI" id="CHEBI:15378"/>
        <dbReference type="ChEBI" id="CHEBI:30616"/>
        <dbReference type="ChEBI" id="CHEBI:32551"/>
        <dbReference type="ChEBI" id="CHEBI:33019"/>
        <dbReference type="ChEBI" id="CHEBI:82748"/>
        <dbReference type="ChEBI" id="CHEBI:83665"/>
        <dbReference type="ChEBI" id="CHEBI:456215"/>
        <dbReference type="EC" id="6.3.4.19"/>
    </reaction>
</comment>
<comment type="subcellular location">
    <subcellularLocation>
        <location evidence="1">Cytoplasm</location>
    </subcellularLocation>
</comment>
<comment type="domain">
    <text>The N-terminal region contains the highly conserved SGGXDS motif, predicted to be a P-loop motif involved in ATP binding.</text>
</comment>
<comment type="similarity">
    <text evidence="1">Belongs to the tRNA(Ile)-lysidine synthase family.</text>
</comment>
<organism>
    <name type="scientific">Haemophilus ducreyi (strain 35000HP / ATCC 700724)</name>
    <dbReference type="NCBI Taxonomy" id="233412"/>
    <lineage>
        <taxon>Bacteria</taxon>
        <taxon>Pseudomonadati</taxon>
        <taxon>Pseudomonadota</taxon>
        <taxon>Gammaproteobacteria</taxon>
        <taxon>Pasteurellales</taxon>
        <taxon>Pasteurellaceae</taxon>
        <taxon>Haemophilus</taxon>
    </lineage>
</organism>